<proteinExistence type="evidence at protein level"/>
<sequence>MELLQVLKRGLQQVSGHGGLRGYLRVLFRANDVRVGTLVGEDKYGNKYYEDNKQFFGRHRWVIYTTEMNGKNTFWDVDGSMVPPEWHRWLHCMTDDPPTVKPPTARKFIWTNHKFNLSGTPQQYVPYSTTRKKIQEWVPPSTPYK</sequence>
<evidence type="ECO:0000250" key="1">
    <source>
        <dbReference type="UniProtKB" id="Q9UI09"/>
    </source>
</evidence>
<evidence type="ECO:0000269" key="2">
    <source>
    </source>
</evidence>
<evidence type="ECO:0000269" key="3">
    <source>
    </source>
</evidence>
<evidence type="ECO:0000305" key="4"/>
<evidence type="ECO:0000305" key="5">
    <source>
    </source>
</evidence>
<evidence type="ECO:0007829" key="6">
    <source>
        <dbReference type="PDB" id="7QSL"/>
    </source>
</evidence>
<evidence type="ECO:0007829" key="7">
    <source>
        <dbReference type="PDB" id="7QSM"/>
    </source>
</evidence>
<protein>
    <recommendedName>
        <fullName>NADH dehydrogenase [ubiquinone] 1 alpha subcomplex subunit 12</fullName>
    </recommendedName>
    <alternativeName>
        <fullName>Complex I-B17.2</fullName>
        <shortName>CI-B17.2</shortName>
        <shortName>CIB17.2</shortName>
    </alternativeName>
    <alternativeName>
        <fullName>NADH-ubiquinone oxidoreductase subunit B17.2</fullName>
    </alternativeName>
</protein>
<dbReference type="EMBL" id="AJ011400">
    <property type="protein sequence ID" value="CAA09608.1"/>
    <property type="molecule type" value="mRNA"/>
</dbReference>
<dbReference type="EMBL" id="BC102502">
    <property type="protein sequence ID" value="AAI02503.1"/>
    <property type="molecule type" value="mRNA"/>
</dbReference>
<dbReference type="RefSeq" id="NP_776731.1">
    <property type="nucleotide sequence ID" value="NM_174306.3"/>
</dbReference>
<dbReference type="PDB" id="5LC5">
    <property type="method" value="EM"/>
    <property type="resolution" value="4.35 A"/>
    <property type="chains" value="q=2-139"/>
</dbReference>
<dbReference type="PDB" id="5LDW">
    <property type="method" value="EM"/>
    <property type="resolution" value="4.27 A"/>
    <property type="chains" value="q=1-145"/>
</dbReference>
<dbReference type="PDB" id="5LDX">
    <property type="method" value="EM"/>
    <property type="resolution" value="5.60 A"/>
    <property type="chains" value="q=2-139"/>
</dbReference>
<dbReference type="PDB" id="5O31">
    <property type="method" value="EM"/>
    <property type="resolution" value="4.13 A"/>
    <property type="chains" value="q=1-145"/>
</dbReference>
<dbReference type="PDB" id="7DGQ">
    <property type="method" value="EM"/>
    <property type="resolution" value="5.00 A"/>
    <property type="chains" value="U=1-145"/>
</dbReference>
<dbReference type="PDB" id="7DGR">
    <property type="method" value="EM"/>
    <property type="resolution" value="4.60 A"/>
    <property type="chains" value="U=1-145"/>
</dbReference>
<dbReference type="PDB" id="7DGS">
    <property type="method" value="EM"/>
    <property type="resolution" value="7.80 A"/>
    <property type="chains" value="U=1-145"/>
</dbReference>
<dbReference type="PDB" id="7DGZ">
    <property type="method" value="EM"/>
    <property type="resolution" value="3.80 A"/>
    <property type="chains" value="U=1-145"/>
</dbReference>
<dbReference type="PDB" id="7DH0">
    <property type="method" value="EM"/>
    <property type="resolution" value="4.20 A"/>
    <property type="chains" value="U=1-145"/>
</dbReference>
<dbReference type="PDB" id="7DKF">
    <property type="method" value="EM"/>
    <property type="resolution" value="8.30 A"/>
    <property type="chains" value="U2=1-145"/>
</dbReference>
<dbReference type="PDB" id="7QSD">
    <property type="method" value="EM"/>
    <property type="resolution" value="3.10 A"/>
    <property type="chains" value="q=1-145"/>
</dbReference>
<dbReference type="PDB" id="7QSK">
    <property type="method" value="EM"/>
    <property type="resolution" value="2.84 A"/>
    <property type="chains" value="q=1-145"/>
</dbReference>
<dbReference type="PDB" id="7QSL">
    <property type="method" value="EM"/>
    <property type="resolution" value="2.76 A"/>
    <property type="chains" value="q=1-145"/>
</dbReference>
<dbReference type="PDB" id="7QSM">
    <property type="method" value="EM"/>
    <property type="resolution" value="2.30 A"/>
    <property type="chains" value="q=1-145"/>
</dbReference>
<dbReference type="PDB" id="7QSN">
    <property type="method" value="EM"/>
    <property type="resolution" value="2.81 A"/>
    <property type="chains" value="q=1-145"/>
</dbReference>
<dbReference type="PDB" id="7QSO">
    <property type="method" value="EM"/>
    <property type="resolution" value="3.02 A"/>
    <property type="chains" value="q=1-145"/>
</dbReference>
<dbReference type="PDB" id="7R41">
    <property type="method" value="EM"/>
    <property type="resolution" value="2.30 A"/>
    <property type="chains" value="q=1-145"/>
</dbReference>
<dbReference type="PDB" id="7R42">
    <property type="method" value="EM"/>
    <property type="resolution" value="2.30 A"/>
    <property type="chains" value="q=1-145"/>
</dbReference>
<dbReference type="PDB" id="7R43">
    <property type="method" value="EM"/>
    <property type="resolution" value="2.40 A"/>
    <property type="chains" value="q=1-145"/>
</dbReference>
<dbReference type="PDB" id="7R44">
    <property type="method" value="EM"/>
    <property type="resolution" value="2.40 A"/>
    <property type="chains" value="q=1-145"/>
</dbReference>
<dbReference type="PDB" id="7R45">
    <property type="method" value="EM"/>
    <property type="resolution" value="2.40 A"/>
    <property type="chains" value="q=1-145"/>
</dbReference>
<dbReference type="PDB" id="7R46">
    <property type="method" value="EM"/>
    <property type="resolution" value="2.40 A"/>
    <property type="chains" value="q=1-145"/>
</dbReference>
<dbReference type="PDB" id="7R47">
    <property type="method" value="EM"/>
    <property type="resolution" value="2.30 A"/>
    <property type="chains" value="q=1-145"/>
</dbReference>
<dbReference type="PDB" id="7R48">
    <property type="method" value="EM"/>
    <property type="resolution" value="2.30 A"/>
    <property type="chains" value="q=1-145"/>
</dbReference>
<dbReference type="PDB" id="7R4C">
    <property type="method" value="EM"/>
    <property type="resolution" value="2.30 A"/>
    <property type="chains" value="q=1-145"/>
</dbReference>
<dbReference type="PDB" id="7R4D">
    <property type="method" value="EM"/>
    <property type="resolution" value="2.30 A"/>
    <property type="chains" value="q=1-145"/>
</dbReference>
<dbReference type="PDB" id="7R4F">
    <property type="method" value="EM"/>
    <property type="resolution" value="2.40 A"/>
    <property type="chains" value="q=1-145"/>
</dbReference>
<dbReference type="PDB" id="7R4G">
    <property type="method" value="EM"/>
    <property type="resolution" value="2.50 A"/>
    <property type="chains" value="q=1-145"/>
</dbReference>
<dbReference type="PDB" id="8Q0A">
    <property type="method" value="EM"/>
    <property type="resolution" value="3.10 A"/>
    <property type="chains" value="q=1-145"/>
</dbReference>
<dbReference type="PDB" id="8Q0F">
    <property type="method" value="EM"/>
    <property type="resolution" value="3.10 A"/>
    <property type="chains" value="q=1-145"/>
</dbReference>
<dbReference type="PDB" id="8Q0J">
    <property type="method" value="EM"/>
    <property type="resolution" value="3.80 A"/>
    <property type="chains" value="q=1-145"/>
</dbReference>
<dbReference type="PDB" id="8Q0M">
    <property type="method" value="EM"/>
    <property type="resolution" value="3.10 A"/>
    <property type="chains" value="q=1-145"/>
</dbReference>
<dbReference type="PDB" id="8Q0O">
    <property type="method" value="EM"/>
    <property type="resolution" value="3.10 A"/>
    <property type="chains" value="q=1-145"/>
</dbReference>
<dbReference type="PDB" id="8Q0Q">
    <property type="method" value="EM"/>
    <property type="resolution" value="3.60 A"/>
    <property type="chains" value="q=1-145"/>
</dbReference>
<dbReference type="PDB" id="8Q1P">
    <property type="method" value="EM"/>
    <property type="resolution" value="2.90 A"/>
    <property type="chains" value="q=1-145"/>
</dbReference>
<dbReference type="PDB" id="8Q1U">
    <property type="method" value="EM"/>
    <property type="resolution" value="3.30 A"/>
    <property type="chains" value="q=1-145"/>
</dbReference>
<dbReference type="PDB" id="8Q1Y">
    <property type="method" value="EM"/>
    <property type="resolution" value="2.60 A"/>
    <property type="chains" value="q=1-145"/>
</dbReference>
<dbReference type="PDB" id="8Q25">
    <property type="method" value="EM"/>
    <property type="resolution" value="2.80 A"/>
    <property type="chains" value="q=1-145"/>
</dbReference>
<dbReference type="PDB" id="8Q45">
    <property type="method" value="EM"/>
    <property type="resolution" value="2.70 A"/>
    <property type="chains" value="q=1-145"/>
</dbReference>
<dbReference type="PDB" id="8Q46">
    <property type="method" value="EM"/>
    <property type="resolution" value="2.60 A"/>
    <property type="chains" value="q=1-145"/>
</dbReference>
<dbReference type="PDB" id="8Q47">
    <property type="method" value="EM"/>
    <property type="resolution" value="2.90 A"/>
    <property type="chains" value="q=1-145"/>
</dbReference>
<dbReference type="PDB" id="8Q48">
    <property type="method" value="EM"/>
    <property type="resolution" value="2.50 A"/>
    <property type="chains" value="q=1-145"/>
</dbReference>
<dbReference type="PDB" id="8Q49">
    <property type="method" value="EM"/>
    <property type="resolution" value="2.60 A"/>
    <property type="chains" value="q=1-145"/>
</dbReference>
<dbReference type="PDB" id="8Q4A">
    <property type="method" value="EM"/>
    <property type="resolution" value="2.60 A"/>
    <property type="chains" value="q=1-145"/>
</dbReference>
<dbReference type="PDBsum" id="5LC5"/>
<dbReference type="PDBsum" id="5LDW"/>
<dbReference type="PDBsum" id="5LDX"/>
<dbReference type="PDBsum" id="5O31"/>
<dbReference type="PDBsum" id="7DGQ"/>
<dbReference type="PDBsum" id="7DGR"/>
<dbReference type="PDBsum" id="7DGS"/>
<dbReference type="PDBsum" id="7DGZ"/>
<dbReference type="PDBsum" id="7DH0"/>
<dbReference type="PDBsum" id="7DKF"/>
<dbReference type="PDBsum" id="7QSD"/>
<dbReference type="PDBsum" id="7QSK"/>
<dbReference type="PDBsum" id="7QSL"/>
<dbReference type="PDBsum" id="7QSM"/>
<dbReference type="PDBsum" id="7QSN"/>
<dbReference type="PDBsum" id="7QSO"/>
<dbReference type="PDBsum" id="7R41"/>
<dbReference type="PDBsum" id="7R42"/>
<dbReference type="PDBsum" id="7R43"/>
<dbReference type="PDBsum" id="7R44"/>
<dbReference type="PDBsum" id="7R45"/>
<dbReference type="PDBsum" id="7R46"/>
<dbReference type="PDBsum" id="7R47"/>
<dbReference type="PDBsum" id="7R48"/>
<dbReference type="PDBsum" id="7R4C"/>
<dbReference type="PDBsum" id="7R4D"/>
<dbReference type="PDBsum" id="7R4F"/>
<dbReference type="PDBsum" id="7R4G"/>
<dbReference type="PDBsum" id="8Q0A"/>
<dbReference type="PDBsum" id="8Q0F"/>
<dbReference type="PDBsum" id="8Q0J"/>
<dbReference type="PDBsum" id="8Q0M"/>
<dbReference type="PDBsum" id="8Q0O"/>
<dbReference type="PDBsum" id="8Q0Q"/>
<dbReference type="PDBsum" id="8Q1P"/>
<dbReference type="PDBsum" id="8Q1U"/>
<dbReference type="PDBsum" id="8Q1Y"/>
<dbReference type="PDBsum" id="8Q25"/>
<dbReference type="PDBsum" id="8Q45"/>
<dbReference type="PDBsum" id="8Q46"/>
<dbReference type="PDBsum" id="8Q47"/>
<dbReference type="PDBsum" id="8Q48"/>
<dbReference type="PDBsum" id="8Q49"/>
<dbReference type="PDBsum" id="8Q4A"/>
<dbReference type="EMDB" id="EMD-14127"/>
<dbReference type="EMDB" id="EMD-14132"/>
<dbReference type="EMDB" id="EMD-14133"/>
<dbReference type="EMDB" id="EMD-14134"/>
<dbReference type="EMDB" id="EMD-14139"/>
<dbReference type="EMDB" id="EMD-14140"/>
<dbReference type="EMDB" id="EMD-14251"/>
<dbReference type="EMDB" id="EMD-14256"/>
<dbReference type="EMDB" id="EMD-14261"/>
<dbReference type="EMDB" id="EMD-14266"/>
<dbReference type="EMDB" id="EMD-14272"/>
<dbReference type="EMDB" id="EMD-14277"/>
<dbReference type="EMDB" id="EMD-14282"/>
<dbReference type="EMDB" id="EMD-14287"/>
<dbReference type="EMDB" id="EMD-14292"/>
<dbReference type="EMDB" id="EMD-14297"/>
<dbReference type="EMDB" id="EMD-14302"/>
<dbReference type="EMDB" id="EMD-14307"/>
<dbReference type="EMDB" id="EMD-18051"/>
<dbReference type="EMDB" id="EMD-18052"/>
<dbReference type="EMDB" id="EMD-18054"/>
<dbReference type="EMDB" id="EMD-18055"/>
<dbReference type="EMDB" id="EMD-18057"/>
<dbReference type="EMDB" id="EMD-18059"/>
<dbReference type="EMDB" id="EMD-18066"/>
<dbReference type="EMDB" id="EMD-18067"/>
<dbReference type="EMDB" id="EMD-18068"/>
<dbReference type="EMDB" id="EMD-18069"/>
<dbReference type="EMDB" id="EMD-18138"/>
<dbReference type="EMDB" id="EMD-18139"/>
<dbReference type="EMDB" id="EMD-18140"/>
<dbReference type="EMDB" id="EMD-18141"/>
<dbReference type="EMDB" id="EMD-18142"/>
<dbReference type="EMDB" id="EMD-18143"/>
<dbReference type="EMDB" id="EMD-30673"/>
<dbReference type="EMDB" id="EMD-30674"/>
<dbReference type="EMDB" id="EMD-30675"/>
<dbReference type="EMDB" id="EMD-30676"/>
<dbReference type="EMDB" id="EMD-30677"/>
<dbReference type="EMDB" id="EMD-30706"/>
<dbReference type="EMDB" id="EMD-3731"/>
<dbReference type="EMDB" id="EMD-4032"/>
<dbReference type="EMDB" id="EMD-4040"/>
<dbReference type="EMDB" id="EMD-4041"/>
<dbReference type="SMR" id="O97725"/>
<dbReference type="CORUM" id="O97725"/>
<dbReference type="DIP" id="DIP-38802N"/>
<dbReference type="FunCoup" id="O97725">
    <property type="interactions" value="2529"/>
</dbReference>
<dbReference type="IntAct" id="O97725">
    <property type="interactions" value="3"/>
</dbReference>
<dbReference type="STRING" id="9913.ENSBTAP00000019529"/>
<dbReference type="TCDB" id="3.D.1.6.1">
    <property type="family name" value="the h+ or na+-translocating nadh dehydrogenase (ndh) family"/>
</dbReference>
<dbReference type="GlyGen" id="O97725">
    <property type="glycosylation" value="1 site, 1 O-linked glycan (1 site)"/>
</dbReference>
<dbReference type="iPTMnet" id="O97725"/>
<dbReference type="PaxDb" id="9913-ENSBTAP00000019529"/>
<dbReference type="Ensembl" id="ENSBTAT00000094434.1">
    <property type="protein sequence ID" value="ENSBTAP00000088408.1"/>
    <property type="gene ID" value="ENSBTAG00000067029.1"/>
</dbReference>
<dbReference type="GeneID" id="281742"/>
<dbReference type="KEGG" id="bta:281742"/>
<dbReference type="CTD" id="55967"/>
<dbReference type="eggNOG" id="KOG3382">
    <property type="taxonomic scope" value="Eukaryota"/>
</dbReference>
<dbReference type="GeneTree" id="ENSGT00390000005848"/>
<dbReference type="HOGENOM" id="CLU_110455_1_0_1"/>
<dbReference type="InParanoid" id="O97725"/>
<dbReference type="OrthoDB" id="274641at2759"/>
<dbReference type="TreeFam" id="TF106106"/>
<dbReference type="Proteomes" id="UP000009136">
    <property type="component" value="Chromosome 5"/>
</dbReference>
<dbReference type="GO" id="GO:0005743">
    <property type="term" value="C:mitochondrial inner membrane"/>
    <property type="evidence" value="ECO:0007669"/>
    <property type="project" value="UniProtKB-SubCell"/>
</dbReference>
<dbReference type="GO" id="GO:0005739">
    <property type="term" value="C:mitochondrion"/>
    <property type="evidence" value="ECO:0000305"/>
    <property type="project" value="UniProtKB"/>
</dbReference>
<dbReference type="GO" id="GO:0045271">
    <property type="term" value="C:respiratory chain complex I"/>
    <property type="evidence" value="ECO:0000314"/>
    <property type="project" value="UniProtKB"/>
</dbReference>
<dbReference type="InterPro" id="IPR007763">
    <property type="entry name" value="NDUFA12"/>
</dbReference>
<dbReference type="PANTHER" id="PTHR12910:SF2">
    <property type="entry name" value="NADH DEHYDROGENASE [UBIQUINONE] 1 ALPHA SUBCOMPLEX SUBUNIT 12"/>
    <property type="match status" value="1"/>
</dbReference>
<dbReference type="PANTHER" id="PTHR12910">
    <property type="entry name" value="NADH-UBIQUINONE OXIDOREDUCTASE SUBUNIT B17.2"/>
    <property type="match status" value="1"/>
</dbReference>
<dbReference type="Pfam" id="PF05071">
    <property type="entry name" value="NDUFA12"/>
    <property type="match status" value="1"/>
</dbReference>
<feature type="chain" id="PRO_0000118844" description="NADH dehydrogenase [ubiquinone] 1 alpha subcomplex subunit 12">
    <location>
        <begin position="1"/>
        <end position="145"/>
    </location>
</feature>
<feature type="modified residue" description="N-acetylmethionine" evidence="3">
    <location>
        <position position="1"/>
    </location>
</feature>
<feature type="helix" evidence="7">
    <location>
        <begin position="2"/>
        <end position="16"/>
    </location>
</feature>
<feature type="helix" evidence="7">
    <location>
        <begin position="20"/>
        <end position="30"/>
    </location>
</feature>
<feature type="strand" evidence="7">
    <location>
        <begin position="37"/>
        <end position="41"/>
    </location>
</feature>
<feature type="strand" evidence="7">
    <location>
        <begin position="47"/>
        <end position="50"/>
    </location>
</feature>
<feature type="turn" evidence="7">
    <location>
        <begin position="56"/>
        <end position="58"/>
    </location>
</feature>
<feature type="strand" evidence="7">
    <location>
        <begin position="59"/>
        <end position="63"/>
    </location>
</feature>
<feature type="strand" evidence="7">
    <location>
        <begin position="66"/>
        <end position="68"/>
    </location>
</feature>
<feature type="helix" evidence="7">
    <location>
        <begin position="79"/>
        <end position="81"/>
    </location>
</feature>
<feature type="helix" evidence="7">
    <location>
        <begin position="84"/>
        <end position="90"/>
    </location>
</feature>
<feature type="turn" evidence="7">
    <location>
        <begin position="98"/>
        <end position="100"/>
    </location>
</feature>
<feature type="strand" evidence="6">
    <location>
        <begin position="107"/>
        <end position="109"/>
    </location>
</feature>
<name>NDUAC_BOVIN</name>
<gene>
    <name type="primary">NDUFA12</name>
</gene>
<reference key="1">
    <citation type="journal article" date="1998" name="FEBS Lett.">
        <title>NADH:ubiquinone oxidoreductase from bovine heart mitochondria: sequence of a novel 17.2-kDa subunit.</title>
        <authorList>
            <person name="Skehel J.M."/>
            <person name="Fearnley I.M."/>
            <person name="Walker J.E."/>
        </authorList>
    </citation>
    <scope>NUCLEOTIDE SEQUENCE [MRNA]</scope>
    <scope>ACETYLATION AT MET-1</scope>
    <source>
        <tissue>Heart</tissue>
    </source>
</reference>
<reference key="2">
    <citation type="submission" date="2005-08" db="EMBL/GenBank/DDBJ databases">
        <authorList>
            <consortium name="NIH - Mammalian Gene Collection (MGC) project"/>
        </authorList>
    </citation>
    <scope>NUCLEOTIDE SEQUENCE [LARGE SCALE MRNA]</scope>
    <source>
        <strain>Crossbred X Angus</strain>
        <tissue>Ileum</tissue>
    </source>
</reference>
<reference key="3">
    <citation type="journal article" date="2008" name="Anal. Biochem.">
        <title>Subunit analysis of bovine heart complex I by reversed-phase high-performance liquid chromatography, electrospray ionization-tandem mass spectrometry, and matrix-assisted laser desorption/ionization-time-of-flight mass spectrometry.</title>
        <authorList>
            <person name="Lemma-Gray P."/>
            <person name="Valusova E."/>
            <person name="Carroll C.A."/>
            <person name="Weintraub S.T."/>
            <person name="Musatov A."/>
            <person name="Robinson N.C."/>
        </authorList>
    </citation>
    <scope>SUBUNIT</scope>
    <scope>IDENTIFICATION IN COMPLEX I</scope>
    <scope>SUBCELLULAR LOCATION</scope>
</reference>
<organism>
    <name type="scientific">Bos taurus</name>
    <name type="common">Bovine</name>
    <dbReference type="NCBI Taxonomy" id="9913"/>
    <lineage>
        <taxon>Eukaryota</taxon>
        <taxon>Metazoa</taxon>
        <taxon>Chordata</taxon>
        <taxon>Craniata</taxon>
        <taxon>Vertebrata</taxon>
        <taxon>Euteleostomi</taxon>
        <taxon>Mammalia</taxon>
        <taxon>Eutheria</taxon>
        <taxon>Laurasiatheria</taxon>
        <taxon>Artiodactyla</taxon>
        <taxon>Ruminantia</taxon>
        <taxon>Pecora</taxon>
        <taxon>Bovidae</taxon>
        <taxon>Bovinae</taxon>
        <taxon>Bos</taxon>
    </lineage>
</organism>
<comment type="function">
    <text evidence="1">Accessory subunit of the mitochondrial membrane respiratory chain NADH dehydrogenase (Complex I), that is believed not to be involved in catalysis. Complex I functions in the transfer of electrons from NADH to the respiratory chain. The immediate electron acceptor for the enzyme is believed to be ubiquinone.</text>
</comment>
<comment type="subunit">
    <text evidence="2">Complex I is composed of 45 different subunits.</text>
</comment>
<comment type="subcellular location">
    <subcellularLocation>
        <location evidence="5">Mitochondrion inner membrane</location>
        <topology evidence="4">Peripheral membrane protein</topology>
        <orientation evidence="4">Matrix side</orientation>
    </subcellularLocation>
</comment>
<comment type="similarity">
    <text evidence="4">Belongs to the complex I NDUFA12 subunit family.</text>
</comment>
<keyword id="KW-0002">3D-structure</keyword>
<keyword id="KW-0007">Acetylation</keyword>
<keyword id="KW-0249">Electron transport</keyword>
<keyword id="KW-0472">Membrane</keyword>
<keyword id="KW-0496">Mitochondrion</keyword>
<keyword id="KW-0999">Mitochondrion inner membrane</keyword>
<keyword id="KW-1185">Reference proteome</keyword>
<keyword id="KW-0679">Respiratory chain</keyword>
<keyword id="KW-0813">Transport</keyword>
<accession>O97725</accession>
<accession>Q3T092</accession>